<evidence type="ECO:0000255" key="1">
    <source>
        <dbReference type="HAMAP-Rule" id="MF_00736"/>
    </source>
</evidence>
<evidence type="ECO:0000305" key="2"/>
<organism>
    <name type="scientific">Bacillus cereus (strain ATCC 10987 / NRS 248)</name>
    <dbReference type="NCBI Taxonomy" id="222523"/>
    <lineage>
        <taxon>Bacteria</taxon>
        <taxon>Bacillati</taxon>
        <taxon>Bacillota</taxon>
        <taxon>Bacilli</taxon>
        <taxon>Bacillales</taxon>
        <taxon>Bacillaceae</taxon>
        <taxon>Bacillus</taxon>
        <taxon>Bacillus cereus group</taxon>
    </lineage>
</organism>
<feature type="chain" id="PRO_0000104236" description="Large ribosomal subunit protein uL11">
    <location>
        <begin position="1"/>
        <end position="141"/>
    </location>
</feature>
<gene>
    <name evidence="1" type="primary">rplK</name>
    <name type="ordered locus">BCE_0097</name>
</gene>
<name>RL11_BACC1</name>
<proteinExistence type="inferred from homology"/>
<sequence length="141" mass="14976">MAKKVIKMVKLQIPAGKANPAPPVGPALGQAGVNIMGFCKEFNARTADQAGLIIPVEITVFEDRSFTFITKTPPAAVLLKKVAGIESGSGEPNRNKVATVKRDKVREIAETKMPDLNAASVEAAMRMVEGTARSMGIVIED</sequence>
<protein>
    <recommendedName>
        <fullName evidence="1">Large ribosomal subunit protein uL11</fullName>
    </recommendedName>
    <alternativeName>
        <fullName evidence="2">50S ribosomal protein L11</fullName>
    </alternativeName>
</protein>
<reference key="1">
    <citation type="journal article" date="2004" name="Nucleic Acids Res.">
        <title>The genome sequence of Bacillus cereus ATCC 10987 reveals metabolic adaptations and a large plasmid related to Bacillus anthracis pXO1.</title>
        <authorList>
            <person name="Rasko D.A."/>
            <person name="Ravel J."/>
            <person name="Oekstad O.A."/>
            <person name="Helgason E."/>
            <person name="Cer R.Z."/>
            <person name="Jiang L."/>
            <person name="Shores K.A."/>
            <person name="Fouts D.E."/>
            <person name="Tourasse N.J."/>
            <person name="Angiuoli S.V."/>
            <person name="Kolonay J.F."/>
            <person name="Nelson W.C."/>
            <person name="Kolstoe A.-B."/>
            <person name="Fraser C.M."/>
            <person name="Read T.D."/>
        </authorList>
    </citation>
    <scope>NUCLEOTIDE SEQUENCE [LARGE SCALE GENOMIC DNA]</scope>
    <source>
        <strain>ATCC 10987 / NRS 248</strain>
    </source>
</reference>
<dbReference type="EMBL" id="AE017194">
    <property type="protein sequence ID" value="AAS39033.1"/>
    <property type="molecule type" value="Genomic_DNA"/>
</dbReference>
<dbReference type="SMR" id="P62431"/>
<dbReference type="KEGG" id="bca:BCE_0097"/>
<dbReference type="HOGENOM" id="CLU_074237_2_1_9"/>
<dbReference type="Proteomes" id="UP000002527">
    <property type="component" value="Chromosome"/>
</dbReference>
<dbReference type="GO" id="GO:0022625">
    <property type="term" value="C:cytosolic large ribosomal subunit"/>
    <property type="evidence" value="ECO:0007669"/>
    <property type="project" value="TreeGrafter"/>
</dbReference>
<dbReference type="GO" id="GO:0070180">
    <property type="term" value="F:large ribosomal subunit rRNA binding"/>
    <property type="evidence" value="ECO:0007669"/>
    <property type="project" value="UniProtKB-UniRule"/>
</dbReference>
<dbReference type="GO" id="GO:0003735">
    <property type="term" value="F:structural constituent of ribosome"/>
    <property type="evidence" value="ECO:0007669"/>
    <property type="project" value="InterPro"/>
</dbReference>
<dbReference type="GO" id="GO:0006412">
    <property type="term" value="P:translation"/>
    <property type="evidence" value="ECO:0007669"/>
    <property type="project" value="UniProtKB-UniRule"/>
</dbReference>
<dbReference type="CDD" id="cd00349">
    <property type="entry name" value="Ribosomal_L11"/>
    <property type="match status" value="1"/>
</dbReference>
<dbReference type="FunFam" id="1.10.10.250:FF:000001">
    <property type="entry name" value="50S ribosomal protein L11"/>
    <property type="match status" value="1"/>
</dbReference>
<dbReference type="FunFam" id="3.30.1550.10:FF:000001">
    <property type="entry name" value="50S ribosomal protein L11"/>
    <property type="match status" value="1"/>
</dbReference>
<dbReference type="Gene3D" id="1.10.10.250">
    <property type="entry name" value="Ribosomal protein L11, C-terminal domain"/>
    <property type="match status" value="1"/>
</dbReference>
<dbReference type="Gene3D" id="3.30.1550.10">
    <property type="entry name" value="Ribosomal protein L11/L12, N-terminal domain"/>
    <property type="match status" value="1"/>
</dbReference>
<dbReference type="HAMAP" id="MF_00736">
    <property type="entry name" value="Ribosomal_uL11"/>
    <property type="match status" value="1"/>
</dbReference>
<dbReference type="InterPro" id="IPR000911">
    <property type="entry name" value="Ribosomal_uL11"/>
</dbReference>
<dbReference type="InterPro" id="IPR006519">
    <property type="entry name" value="Ribosomal_uL11_bac-typ"/>
</dbReference>
<dbReference type="InterPro" id="IPR020783">
    <property type="entry name" value="Ribosomal_uL11_C"/>
</dbReference>
<dbReference type="InterPro" id="IPR036769">
    <property type="entry name" value="Ribosomal_uL11_C_sf"/>
</dbReference>
<dbReference type="InterPro" id="IPR020785">
    <property type="entry name" value="Ribosomal_uL11_CS"/>
</dbReference>
<dbReference type="InterPro" id="IPR020784">
    <property type="entry name" value="Ribosomal_uL11_N"/>
</dbReference>
<dbReference type="InterPro" id="IPR036796">
    <property type="entry name" value="Ribosomal_uL11_N_sf"/>
</dbReference>
<dbReference type="NCBIfam" id="TIGR01632">
    <property type="entry name" value="L11_bact"/>
    <property type="match status" value="1"/>
</dbReference>
<dbReference type="PANTHER" id="PTHR11661">
    <property type="entry name" value="60S RIBOSOMAL PROTEIN L12"/>
    <property type="match status" value="1"/>
</dbReference>
<dbReference type="PANTHER" id="PTHR11661:SF1">
    <property type="entry name" value="LARGE RIBOSOMAL SUBUNIT PROTEIN UL11M"/>
    <property type="match status" value="1"/>
</dbReference>
<dbReference type="Pfam" id="PF00298">
    <property type="entry name" value="Ribosomal_L11"/>
    <property type="match status" value="1"/>
</dbReference>
<dbReference type="Pfam" id="PF03946">
    <property type="entry name" value="Ribosomal_L11_N"/>
    <property type="match status" value="1"/>
</dbReference>
<dbReference type="SMART" id="SM00649">
    <property type="entry name" value="RL11"/>
    <property type="match status" value="1"/>
</dbReference>
<dbReference type="SUPFAM" id="SSF54747">
    <property type="entry name" value="Ribosomal L11/L12e N-terminal domain"/>
    <property type="match status" value="1"/>
</dbReference>
<dbReference type="SUPFAM" id="SSF46906">
    <property type="entry name" value="Ribosomal protein L11, C-terminal domain"/>
    <property type="match status" value="1"/>
</dbReference>
<dbReference type="PROSITE" id="PS00359">
    <property type="entry name" value="RIBOSOMAL_L11"/>
    <property type="match status" value="1"/>
</dbReference>
<keyword id="KW-0488">Methylation</keyword>
<keyword id="KW-0687">Ribonucleoprotein</keyword>
<keyword id="KW-0689">Ribosomal protein</keyword>
<keyword id="KW-0694">RNA-binding</keyword>
<keyword id="KW-0699">rRNA-binding</keyword>
<accession>P62431</accession>
<comment type="function">
    <text evidence="1">Forms part of the ribosomal stalk which helps the ribosome interact with GTP-bound translation factors.</text>
</comment>
<comment type="subunit">
    <text evidence="1">Part of the ribosomal stalk of the 50S ribosomal subunit. Interacts with L10 and the large rRNA to form the base of the stalk. L10 forms an elongated spine to which L12 dimers bind in a sequential fashion forming a multimeric L10(L12)X complex.</text>
</comment>
<comment type="PTM">
    <text evidence="1">One or more lysine residues are methylated.</text>
</comment>
<comment type="similarity">
    <text evidence="1">Belongs to the universal ribosomal protein uL11 family.</text>
</comment>